<feature type="chain" id="PRO_0000349631" description="tRNA-specific 2-thiouridylase MnmA">
    <location>
        <begin position="1"/>
        <end position="368"/>
    </location>
</feature>
<feature type="region of interest" description="Interaction with target base in tRNA" evidence="1">
    <location>
        <begin position="97"/>
        <end position="99"/>
    </location>
</feature>
<feature type="region of interest" description="Interaction with tRNA" evidence="1">
    <location>
        <begin position="149"/>
        <end position="151"/>
    </location>
</feature>
<feature type="region of interest" description="Interaction with tRNA" evidence="1">
    <location>
        <begin position="311"/>
        <end position="312"/>
    </location>
</feature>
<feature type="active site" description="Nucleophile" evidence="1">
    <location>
        <position position="102"/>
    </location>
</feature>
<feature type="active site" description="Cysteine persulfide intermediate" evidence="1">
    <location>
        <position position="199"/>
    </location>
</feature>
<feature type="binding site" evidence="1">
    <location>
        <begin position="11"/>
        <end position="18"/>
    </location>
    <ligand>
        <name>ATP</name>
        <dbReference type="ChEBI" id="CHEBI:30616"/>
    </ligand>
</feature>
<feature type="binding site" evidence="1">
    <location>
        <position position="37"/>
    </location>
    <ligand>
        <name>ATP</name>
        <dbReference type="ChEBI" id="CHEBI:30616"/>
    </ligand>
</feature>
<feature type="binding site" evidence="1">
    <location>
        <position position="127"/>
    </location>
    <ligand>
        <name>ATP</name>
        <dbReference type="ChEBI" id="CHEBI:30616"/>
    </ligand>
</feature>
<feature type="site" description="Interaction with tRNA" evidence="1">
    <location>
        <position position="128"/>
    </location>
</feature>
<feature type="site" description="Interaction with tRNA" evidence="1">
    <location>
        <position position="344"/>
    </location>
</feature>
<feature type="disulfide bond" description="Alternate" evidence="1">
    <location>
        <begin position="102"/>
        <end position="199"/>
    </location>
</feature>
<accession>A1AA27</accession>
<proteinExistence type="inferred from homology"/>
<organism>
    <name type="scientific">Escherichia coli O1:K1 / APEC</name>
    <dbReference type="NCBI Taxonomy" id="405955"/>
    <lineage>
        <taxon>Bacteria</taxon>
        <taxon>Pseudomonadati</taxon>
        <taxon>Pseudomonadota</taxon>
        <taxon>Gammaproteobacteria</taxon>
        <taxon>Enterobacterales</taxon>
        <taxon>Enterobacteriaceae</taxon>
        <taxon>Escherichia</taxon>
    </lineage>
</organism>
<keyword id="KW-0067">ATP-binding</keyword>
<keyword id="KW-0963">Cytoplasm</keyword>
<keyword id="KW-1015">Disulfide bond</keyword>
<keyword id="KW-0547">Nucleotide-binding</keyword>
<keyword id="KW-1185">Reference proteome</keyword>
<keyword id="KW-0694">RNA-binding</keyword>
<keyword id="KW-0808">Transferase</keyword>
<keyword id="KW-0819">tRNA processing</keyword>
<keyword id="KW-0820">tRNA-binding</keyword>
<protein>
    <recommendedName>
        <fullName evidence="1">tRNA-specific 2-thiouridylase MnmA</fullName>
        <ecNumber evidence="1">2.8.1.13</ecNumber>
    </recommendedName>
</protein>
<name>MNMA_ECOK1</name>
<comment type="function">
    <text evidence="1">Catalyzes the 2-thiolation of uridine at the wobble position (U34) of tRNA(Lys), tRNA(Glu) and tRNA(Gln), leading to the formation of s(2)U34, the first step of tRNA-mnm(5)s(2)U34 synthesis. Sulfur is provided by IscS, via a sulfur-relay system. Binds ATP and its substrate tRNAs.</text>
</comment>
<comment type="catalytic activity">
    <reaction evidence="1">
        <text>S-sulfanyl-L-cysteinyl-[protein] + uridine(34) in tRNA + AH2 + ATP = 2-thiouridine(34) in tRNA + L-cysteinyl-[protein] + A + AMP + diphosphate + H(+)</text>
        <dbReference type="Rhea" id="RHEA:47032"/>
        <dbReference type="Rhea" id="RHEA-COMP:10131"/>
        <dbReference type="Rhea" id="RHEA-COMP:11726"/>
        <dbReference type="Rhea" id="RHEA-COMP:11727"/>
        <dbReference type="Rhea" id="RHEA-COMP:11728"/>
        <dbReference type="ChEBI" id="CHEBI:13193"/>
        <dbReference type="ChEBI" id="CHEBI:15378"/>
        <dbReference type="ChEBI" id="CHEBI:17499"/>
        <dbReference type="ChEBI" id="CHEBI:29950"/>
        <dbReference type="ChEBI" id="CHEBI:30616"/>
        <dbReference type="ChEBI" id="CHEBI:33019"/>
        <dbReference type="ChEBI" id="CHEBI:61963"/>
        <dbReference type="ChEBI" id="CHEBI:65315"/>
        <dbReference type="ChEBI" id="CHEBI:87170"/>
        <dbReference type="ChEBI" id="CHEBI:456215"/>
        <dbReference type="EC" id="2.8.1.13"/>
    </reaction>
</comment>
<comment type="subunit">
    <text evidence="1">Interacts with TusE.</text>
</comment>
<comment type="subcellular location">
    <subcellularLocation>
        <location evidence="1">Cytoplasm</location>
    </subcellularLocation>
</comment>
<comment type="similarity">
    <text evidence="1">Belongs to the MnmA/TRMU family.</text>
</comment>
<comment type="sequence caution" evidence="2">
    <conflict type="erroneous initiation">
        <sequence resource="EMBL-CDS" id="ABJ00517"/>
    </conflict>
</comment>
<gene>
    <name evidence="1" type="primary">mnmA</name>
    <name type="ordered locus">Ecok1_10230</name>
    <name type="ORF">APECO1_215</name>
</gene>
<reference key="1">
    <citation type="journal article" date="2007" name="J. Bacteriol.">
        <title>The genome sequence of avian pathogenic Escherichia coli strain O1:K1:H7 shares strong similarities with human extraintestinal pathogenic E. coli genomes.</title>
        <authorList>
            <person name="Johnson T.J."/>
            <person name="Kariyawasam S."/>
            <person name="Wannemuehler Y."/>
            <person name="Mangiamele P."/>
            <person name="Johnson S.J."/>
            <person name="Doetkott C."/>
            <person name="Skyberg J.A."/>
            <person name="Lynne A.M."/>
            <person name="Johnson J.R."/>
            <person name="Nolan L.K."/>
        </authorList>
    </citation>
    <scope>NUCLEOTIDE SEQUENCE [LARGE SCALE GENOMIC DNA]</scope>
</reference>
<sequence>MSETAKKVIVGMSGGVDSSVSAWLLQQQGYQVEGLFMKNWEEDDGEEYCTAAADLADAQAVCDKLGIELHTVNFAAEYWDNVFELFLAEYKAGRTPNPDILCNKEIKFKAFLEFAAEDLGADYIATGHYVRRADVDGKSRLLRGLDSNKDQSYFLYTLSHEQIAQSLFPVGELEKPQVRKIAEDLGLVTAKKKDSTGICFIGERKFREFLGRYLPAQPGKIITVDGDEIGEHQGLMYHTLGQRKGLGIGGTKDGTEEPWYVVDKDVENNILIVAQGHEHPRLMSVGLIAQQLHWVDREPFTGTMRCTVKTRYRQTDIPCTVKALDADRIEVIFDEPVAAVTPGQSAVFYNGEVCLGGGIIEQRLPLPV</sequence>
<evidence type="ECO:0000255" key="1">
    <source>
        <dbReference type="HAMAP-Rule" id="MF_00144"/>
    </source>
</evidence>
<evidence type="ECO:0000305" key="2"/>
<dbReference type="EC" id="2.8.1.13" evidence="1"/>
<dbReference type="EMBL" id="CP000468">
    <property type="protein sequence ID" value="ABJ00517.1"/>
    <property type="status" value="ALT_INIT"/>
    <property type="molecule type" value="Genomic_DNA"/>
</dbReference>
<dbReference type="RefSeq" id="WP_001298466.1">
    <property type="nucleotide sequence ID" value="NZ_CADILS010000019.1"/>
</dbReference>
<dbReference type="SMR" id="A1AA27"/>
<dbReference type="KEGG" id="ecv:APECO1_215"/>
<dbReference type="HOGENOM" id="CLU_035188_1_0_6"/>
<dbReference type="Proteomes" id="UP000008216">
    <property type="component" value="Chromosome"/>
</dbReference>
<dbReference type="GO" id="GO:0005737">
    <property type="term" value="C:cytoplasm"/>
    <property type="evidence" value="ECO:0007669"/>
    <property type="project" value="UniProtKB-SubCell"/>
</dbReference>
<dbReference type="GO" id="GO:0005524">
    <property type="term" value="F:ATP binding"/>
    <property type="evidence" value="ECO:0007669"/>
    <property type="project" value="UniProtKB-KW"/>
</dbReference>
<dbReference type="GO" id="GO:0000049">
    <property type="term" value="F:tRNA binding"/>
    <property type="evidence" value="ECO:0007669"/>
    <property type="project" value="UniProtKB-KW"/>
</dbReference>
<dbReference type="GO" id="GO:0103016">
    <property type="term" value="F:tRNA-uridine 2-sulfurtransferase activity"/>
    <property type="evidence" value="ECO:0007669"/>
    <property type="project" value="UniProtKB-EC"/>
</dbReference>
<dbReference type="GO" id="GO:0002143">
    <property type="term" value="P:tRNA wobble position uridine thiolation"/>
    <property type="evidence" value="ECO:0007669"/>
    <property type="project" value="TreeGrafter"/>
</dbReference>
<dbReference type="CDD" id="cd01998">
    <property type="entry name" value="MnmA_TRMU-like"/>
    <property type="match status" value="1"/>
</dbReference>
<dbReference type="FunFam" id="2.30.30.280:FF:000001">
    <property type="entry name" value="tRNA-specific 2-thiouridylase MnmA"/>
    <property type="match status" value="1"/>
</dbReference>
<dbReference type="FunFam" id="2.40.30.10:FF:000023">
    <property type="entry name" value="tRNA-specific 2-thiouridylase MnmA"/>
    <property type="match status" value="1"/>
</dbReference>
<dbReference type="FunFam" id="3.40.50.620:FF:000004">
    <property type="entry name" value="tRNA-specific 2-thiouridylase MnmA"/>
    <property type="match status" value="1"/>
</dbReference>
<dbReference type="Gene3D" id="2.30.30.280">
    <property type="entry name" value="Adenine nucleotide alpha hydrolases-like domains"/>
    <property type="match status" value="1"/>
</dbReference>
<dbReference type="Gene3D" id="3.40.50.620">
    <property type="entry name" value="HUPs"/>
    <property type="match status" value="1"/>
</dbReference>
<dbReference type="Gene3D" id="2.40.30.10">
    <property type="entry name" value="Translation factors"/>
    <property type="match status" value="1"/>
</dbReference>
<dbReference type="HAMAP" id="MF_00144">
    <property type="entry name" value="tRNA_thiouridyl_MnmA"/>
    <property type="match status" value="1"/>
</dbReference>
<dbReference type="InterPro" id="IPR004506">
    <property type="entry name" value="MnmA-like"/>
</dbReference>
<dbReference type="InterPro" id="IPR046885">
    <property type="entry name" value="MnmA-like_C"/>
</dbReference>
<dbReference type="InterPro" id="IPR046884">
    <property type="entry name" value="MnmA-like_central"/>
</dbReference>
<dbReference type="InterPro" id="IPR023382">
    <property type="entry name" value="MnmA-like_central_sf"/>
</dbReference>
<dbReference type="InterPro" id="IPR014729">
    <property type="entry name" value="Rossmann-like_a/b/a_fold"/>
</dbReference>
<dbReference type="NCBIfam" id="NF001138">
    <property type="entry name" value="PRK00143.1"/>
    <property type="match status" value="1"/>
</dbReference>
<dbReference type="NCBIfam" id="TIGR00420">
    <property type="entry name" value="trmU"/>
    <property type="match status" value="1"/>
</dbReference>
<dbReference type="PANTHER" id="PTHR11933:SF5">
    <property type="entry name" value="MITOCHONDRIAL TRNA-SPECIFIC 2-THIOURIDYLASE 1"/>
    <property type="match status" value="1"/>
</dbReference>
<dbReference type="PANTHER" id="PTHR11933">
    <property type="entry name" value="TRNA 5-METHYLAMINOMETHYL-2-THIOURIDYLATE -METHYLTRANSFERASE"/>
    <property type="match status" value="1"/>
</dbReference>
<dbReference type="Pfam" id="PF03054">
    <property type="entry name" value="tRNA_Me_trans"/>
    <property type="match status" value="1"/>
</dbReference>
<dbReference type="Pfam" id="PF20258">
    <property type="entry name" value="tRNA_Me_trans_C"/>
    <property type="match status" value="1"/>
</dbReference>
<dbReference type="Pfam" id="PF20259">
    <property type="entry name" value="tRNA_Me_trans_M"/>
    <property type="match status" value="1"/>
</dbReference>
<dbReference type="SUPFAM" id="SSF52402">
    <property type="entry name" value="Adenine nucleotide alpha hydrolases-like"/>
    <property type="match status" value="1"/>
</dbReference>